<dbReference type="EC" id="4.2.3.5" evidence="1"/>
<dbReference type="EMBL" id="CP001154">
    <property type="protein sequence ID" value="ACO75501.1"/>
    <property type="molecule type" value="Genomic_DNA"/>
</dbReference>
<dbReference type="RefSeq" id="WP_012697987.1">
    <property type="nucleotide sequence ID" value="NC_012559.1"/>
</dbReference>
<dbReference type="SMR" id="C1DBU8"/>
<dbReference type="STRING" id="557598.LHK_02519"/>
<dbReference type="KEGG" id="lhk:LHK_02519"/>
<dbReference type="eggNOG" id="COG0082">
    <property type="taxonomic scope" value="Bacteria"/>
</dbReference>
<dbReference type="HOGENOM" id="CLU_034547_0_2_4"/>
<dbReference type="UniPathway" id="UPA00053">
    <property type="reaction ID" value="UER00090"/>
</dbReference>
<dbReference type="Proteomes" id="UP000002010">
    <property type="component" value="Chromosome"/>
</dbReference>
<dbReference type="GO" id="GO:0005829">
    <property type="term" value="C:cytosol"/>
    <property type="evidence" value="ECO:0007669"/>
    <property type="project" value="TreeGrafter"/>
</dbReference>
<dbReference type="GO" id="GO:0004107">
    <property type="term" value="F:chorismate synthase activity"/>
    <property type="evidence" value="ECO:0007669"/>
    <property type="project" value="UniProtKB-UniRule"/>
</dbReference>
<dbReference type="GO" id="GO:0010181">
    <property type="term" value="F:FMN binding"/>
    <property type="evidence" value="ECO:0007669"/>
    <property type="project" value="TreeGrafter"/>
</dbReference>
<dbReference type="GO" id="GO:0008652">
    <property type="term" value="P:amino acid biosynthetic process"/>
    <property type="evidence" value="ECO:0007669"/>
    <property type="project" value="UniProtKB-KW"/>
</dbReference>
<dbReference type="GO" id="GO:0009073">
    <property type="term" value="P:aromatic amino acid family biosynthetic process"/>
    <property type="evidence" value="ECO:0007669"/>
    <property type="project" value="UniProtKB-KW"/>
</dbReference>
<dbReference type="GO" id="GO:0009423">
    <property type="term" value="P:chorismate biosynthetic process"/>
    <property type="evidence" value="ECO:0007669"/>
    <property type="project" value="UniProtKB-UniRule"/>
</dbReference>
<dbReference type="CDD" id="cd07304">
    <property type="entry name" value="Chorismate_synthase"/>
    <property type="match status" value="1"/>
</dbReference>
<dbReference type="FunFam" id="3.60.150.10:FF:000001">
    <property type="entry name" value="Chorismate synthase"/>
    <property type="match status" value="1"/>
</dbReference>
<dbReference type="Gene3D" id="3.60.150.10">
    <property type="entry name" value="Chorismate synthase AroC"/>
    <property type="match status" value="1"/>
</dbReference>
<dbReference type="HAMAP" id="MF_00300">
    <property type="entry name" value="Chorismate_synth"/>
    <property type="match status" value="1"/>
</dbReference>
<dbReference type="InterPro" id="IPR000453">
    <property type="entry name" value="Chorismate_synth"/>
</dbReference>
<dbReference type="InterPro" id="IPR035904">
    <property type="entry name" value="Chorismate_synth_AroC_sf"/>
</dbReference>
<dbReference type="InterPro" id="IPR020541">
    <property type="entry name" value="Chorismate_synthase_CS"/>
</dbReference>
<dbReference type="NCBIfam" id="TIGR00033">
    <property type="entry name" value="aroC"/>
    <property type="match status" value="1"/>
</dbReference>
<dbReference type="NCBIfam" id="NF003793">
    <property type="entry name" value="PRK05382.1"/>
    <property type="match status" value="1"/>
</dbReference>
<dbReference type="PANTHER" id="PTHR21085">
    <property type="entry name" value="CHORISMATE SYNTHASE"/>
    <property type="match status" value="1"/>
</dbReference>
<dbReference type="PANTHER" id="PTHR21085:SF0">
    <property type="entry name" value="CHORISMATE SYNTHASE"/>
    <property type="match status" value="1"/>
</dbReference>
<dbReference type="Pfam" id="PF01264">
    <property type="entry name" value="Chorismate_synt"/>
    <property type="match status" value="1"/>
</dbReference>
<dbReference type="PIRSF" id="PIRSF001456">
    <property type="entry name" value="Chorismate_synth"/>
    <property type="match status" value="1"/>
</dbReference>
<dbReference type="SUPFAM" id="SSF103263">
    <property type="entry name" value="Chorismate synthase, AroC"/>
    <property type="match status" value="1"/>
</dbReference>
<dbReference type="PROSITE" id="PS00787">
    <property type="entry name" value="CHORISMATE_SYNTHASE_1"/>
    <property type="match status" value="1"/>
</dbReference>
<dbReference type="PROSITE" id="PS00788">
    <property type="entry name" value="CHORISMATE_SYNTHASE_2"/>
    <property type="match status" value="1"/>
</dbReference>
<dbReference type="PROSITE" id="PS00789">
    <property type="entry name" value="CHORISMATE_SYNTHASE_3"/>
    <property type="match status" value="1"/>
</dbReference>
<evidence type="ECO:0000255" key="1">
    <source>
        <dbReference type="HAMAP-Rule" id="MF_00300"/>
    </source>
</evidence>
<feature type="chain" id="PRO_1000132776" description="Chorismate synthase">
    <location>
        <begin position="1"/>
        <end position="366"/>
    </location>
</feature>
<feature type="binding site" evidence="1">
    <location>
        <position position="48"/>
    </location>
    <ligand>
        <name>NADP(+)</name>
        <dbReference type="ChEBI" id="CHEBI:58349"/>
    </ligand>
</feature>
<feature type="binding site" evidence="1">
    <location>
        <position position="54"/>
    </location>
    <ligand>
        <name>NADP(+)</name>
        <dbReference type="ChEBI" id="CHEBI:58349"/>
    </ligand>
</feature>
<feature type="binding site" evidence="1">
    <location>
        <begin position="125"/>
        <end position="127"/>
    </location>
    <ligand>
        <name>FMN</name>
        <dbReference type="ChEBI" id="CHEBI:58210"/>
    </ligand>
</feature>
<feature type="binding site" evidence="1">
    <location>
        <begin position="238"/>
        <end position="239"/>
    </location>
    <ligand>
        <name>FMN</name>
        <dbReference type="ChEBI" id="CHEBI:58210"/>
    </ligand>
</feature>
<feature type="binding site" evidence="1">
    <location>
        <position position="278"/>
    </location>
    <ligand>
        <name>FMN</name>
        <dbReference type="ChEBI" id="CHEBI:58210"/>
    </ligand>
</feature>
<feature type="binding site" evidence="1">
    <location>
        <begin position="293"/>
        <end position="297"/>
    </location>
    <ligand>
        <name>FMN</name>
        <dbReference type="ChEBI" id="CHEBI:58210"/>
    </ligand>
</feature>
<feature type="binding site" evidence="1">
    <location>
        <position position="319"/>
    </location>
    <ligand>
        <name>FMN</name>
        <dbReference type="ChEBI" id="CHEBI:58210"/>
    </ligand>
</feature>
<comment type="function">
    <text evidence="1">Catalyzes the anti-1,4-elimination of the C-3 phosphate and the C-6 proR hydrogen from 5-enolpyruvylshikimate-3-phosphate (EPSP) to yield chorismate, which is the branch point compound that serves as the starting substrate for the three terminal pathways of aromatic amino acid biosynthesis. This reaction introduces a second double bond into the aromatic ring system.</text>
</comment>
<comment type="catalytic activity">
    <reaction evidence="1">
        <text>5-O-(1-carboxyvinyl)-3-phosphoshikimate = chorismate + phosphate</text>
        <dbReference type="Rhea" id="RHEA:21020"/>
        <dbReference type="ChEBI" id="CHEBI:29748"/>
        <dbReference type="ChEBI" id="CHEBI:43474"/>
        <dbReference type="ChEBI" id="CHEBI:57701"/>
        <dbReference type="EC" id="4.2.3.5"/>
    </reaction>
</comment>
<comment type="cofactor">
    <cofactor evidence="1">
        <name>FMNH2</name>
        <dbReference type="ChEBI" id="CHEBI:57618"/>
    </cofactor>
    <text evidence="1">Reduced FMN (FMNH(2)).</text>
</comment>
<comment type="pathway">
    <text evidence="1">Metabolic intermediate biosynthesis; chorismate biosynthesis; chorismate from D-erythrose 4-phosphate and phosphoenolpyruvate: step 7/7.</text>
</comment>
<comment type="subunit">
    <text evidence="1">Homotetramer.</text>
</comment>
<comment type="similarity">
    <text evidence="1">Belongs to the chorismate synthase family.</text>
</comment>
<sequence length="366" mass="39587">MSGNTFGHLFTVTSFGESHGPAIGCVVDGCPPGLAICEADIQRELDRRKPGTSRHVTQRREPDTVEILSGVFEGKTTGTPIALLIRNQDQRSKDYGNIADTFRPGHADYTYWHKYGIRDPRGGGRSSARETAVRVAAGAIAKKWLSERFGIVVRGHLTQIGDIDIPFTSWDLVDTNPFFAADTSRLDELEAYMDSIRKSCDSIGARLRVVAENVPVGWGEPVFDRLDADIAYAMMGINAVKGVEIGAGFGCVTQRGSEHGDELTPEGFVSNHAGGILGGISTGQHIEVSMAIKPTSSIARPRRSIDRQGQPVNMETHGRHDPCVGIRATPIAEAMLALVLIDHALRHRAQCGDVRVETPQIAGRVG</sequence>
<name>AROC_LARHH</name>
<protein>
    <recommendedName>
        <fullName evidence="1">Chorismate synthase</fullName>
        <shortName evidence="1">CS</shortName>
        <ecNumber evidence="1">4.2.3.5</ecNumber>
    </recommendedName>
    <alternativeName>
        <fullName evidence="1">5-enolpyruvylshikimate-3-phosphate phospholyase</fullName>
    </alternativeName>
</protein>
<reference key="1">
    <citation type="journal article" date="2009" name="PLoS Genet.">
        <title>The complete genome and proteome of Laribacter hongkongensis reveal potential mechanisms for adaptations to different temperatures and habitats.</title>
        <authorList>
            <person name="Woo P.C.Y."/>
            <person name="Lau S.K.P."/>
            <person name="Tse H."/>
            <person name="Teng J.L.L."/>
            <person name="Curreem S.O."/>
            <person name="Tsang A.K.L."/>
            <person name="Fan R.Y.Y."/>
            <person name="Wong G.K.M."/>
            <person name="Huang Y."/>
            <person name="Loman N.J."/>
            <person name="Snyder L.A.S."/>
            <person name="Cai J.J."/>
            <person name="Huang J.-D."/>
            <person name="Mak W."/>
            <person name="Pallen M.J."/>
            <person name="Lok S."/>
            <person name="Yuen K.-Y."/>
        </authorList>
    </citation>
    <scope>NUCLEOTIDE SEQUENCE [LARGE SCALE GENOMIC DNA]</scope>
    <source>
        <strain>HLHK9</strain>
    </source>
</reference>
<gene>
    <name evidence="1" type="primary">aroC</name>
    <name type="ordered locus">LHK_02519</name>
</gene>
<proteinExistence type="inferred from homology"/>
<keyword id="KW-0028">Amino-acid biosynthesis</keyword>
<keyword id="KW-0057">Aromatic amino acid biosynthesis</keyword>
<keyword id="KW-0274">FAD</keyword>
<keyword id="KW-0285">Flavoprotein</keyword>
<keyword id="KW-0288">FMN</keyword>
<keyword id="KW-0456">Lyase</keyword>
<keyword id="KW-0521">NADP</keyword>
<keyword id="KW-1185">Reference proteome</keyword>
<organism>
    <name type="scientific">Laribacter hongkongensis (strain HLHK9)</name>
    <dbReference type="NCBI Taxonomy" id="557598"/>
    <lineage>
        <taxon>Bacteria</taxon>
        <taxon>Pseudomonadati</taxon>
        <taxon>Pseudomonadota</taxon>
        <taxon>Betaproteobacteria</taxon>
        <taxon>Neisseriales</taxon>
        <taxon>Aquaspirillaceae</taxon>
        <taxon>Laribacter</taxon>
    </lineage>
</organism>
<accession>C1DBU8</accession>